<protein>
    <recommendedName>
        <fullName>UPF0479 membrane protein YFL068W</fullName>
    </recommendedName>
</protein>
<feature type="chain" id="PRO_0000202666" description="UPF0479 membrane protein YFL068W">
    <location>
        <begin position="1"/>
        <end position="160"/>
    </location>
</feature>
<feature type="transmembrane region" description="Helical" evidence="1">
    <location>
        <begin position="39"/>
        <end position="59"/>
    </location>
</feature>
<feature type="transmembrane region" description="Helical" evidence="1">
    <location>
        <begin position="136"/>
        <end position="156"/>
    </location>
</feature>
<feature type="sequence conflict" description="In Ref. 3; AAS56130." evidence="2" ref="3">
    <original>P</original>
    <variation>L</variation>
    <location>
        <position position="47"/>
    </location>
</feature>
<evidence type="ECO:0000255" key="1"/>
<evidence type="ECO:0000305" key="2"/>
<name>YFG8_YEAST</name>
<keyword id="KW-0472">Membrane</keyword>
<keyword id="KW-1185">Reference proteome</keyword>
<keyword id="KW-0812">Transmembrane</keyword>
<keyword id="KW-1133">Transmembrane helix</keyword>
<comment type="subcellular location">
    <subcellularLocation>
        <location evidence="2">Membrane</location>
        <topology evidence="2">Multi-pass membrane protein</topology>
    </subcellularLocation>
</comment>
<comment type="similarity">
    <text evidence="2">Belongs to the UPF0479 family.</text>
</comment>
<dbReference type="EMBL" id="D50617">
    <property type="protein sequence ID" value="BAA09173.1"/>
    <property type="molecule type" value="Genomic_DNA"/>
</dbReference>
<dbReference type="EMBL" id="AY557804">
    <property type="protein sequence ID" value="AAS56130.1"/>
    <property type="molecule type" value="Genomic_DNA"/>
</dbReference>
<dbReference type="EMBL" id="BK006940">
    <property type="protein sequence ID" value="DAA12373.1"/>
    <property type="molecule type" value="Genomic_DNA"/>
</dbReference>
<dbReference type="PIR" id="S56187">
    <property type="entry name" value="S56187"/>
</dbReference>
<dbReference type="RefSeq" id="NP_116587.1">
    <property type="nucleotide sequence ID" value="NM_001179899.1"/>
</dbReference>
<dbReference type="BioGRID" id="31080">
    <property type="interactions" value="4"/>
</dbReference>
<dbReference type="FunCoup" id="P0CX99">
    <property type="interactions" value="56"/>
</dbReference>
<dbReference type="STRING" id="4932.YFL068W"/>
<dbReference type="PaxDb" id="4932-YFL068W"/>
<dbReference type="EnsemblFungi" id="YFL068W_mRNA">
    <property type="protein sequence ID" value="YFL068W"/>
    <property type="gene ID" value="YFL068W"/>
</dbReference>
<dbReference type="EnsemblFungi" id="YLL066W-A_mRNA">
    <property type="protein sequence ID" value="YLL066W-A"/>
    <property type="gene ID" value="YLL066W-A"/>
</dbReference>
<dbReference type="EnsemblFungi" id="YLL067W-A_mRNA">
    <property type="protein sequence ID" value="YLL067W-A"/>
    <property type="gene ID" value="YLL067W-A"/>
</dbReference>
<dbReference type="GeneID" id="850476"/>
<dbReference type="KEGG" id="sce:YFL068W"/>
<dbReference type="AGR" id="SGD:S000001826"/>
<dbReference type="SGD" id="S000001826">
    <property type="gene designation" value="YFL068W"/>
</dbReference>
<dbReference type="VEuPathDB" id="FungiDB:YFL068W"/>
<dbReference type="HOGENOM" id="CLU_139933_0_0_1"/>
<dbReference type="InParanoid" id="P0CX99"/>
<dbReference type="BioCyc" id="YEAST:G3O-30400-MONOMER"/>
<dbReference type="PRO" id="PR:P0CX99"/>
<dbReference type="Proteomes" id="UP000002311">
    <property type="component" value="Chromosome VI"/>
</dbReference>
<dbReference type="RNAct" id="P0CX99">
    <property type="molecule type" value="protein"/>
</dbReference>
<dbReference type="ExpressionAtlas" id="P0CX99">
    <property type="expression patterns" value="baseline"/>
</dbReference>
<dbReference type="GO" id="GO:0005829">
    <property type="term" value="C:cytosol"/>
    <property type="evidence" value="ECO:0007005"/>
    <property type="project" value="SGD"/>
</dbReference>
<dbReference type="GO" id="GO:0016020">
    <property type="term" value="C:membrane"/>
    <property type="evidence" value="ECO:0007669"/>
    <property type="project" value="UniProtKB-SubCell"/>
</dbReference>
<proteinExistence type="inferred from homology"/>
<gene>
    <name type="ordered locus">YFL068W</name>
</gene>
<sequence length="160" mass="18593">MMPAKLQLDVLRTLQSSARHGTQTLKNSNFLERFHKDRIVFCLPFFPALFLVPVQKVLQHLCLRFTQVAPYFIIQLFDLPSRHAENLAPLLASCRIQYTNCFSSSSNGQVPSIISLYLRVDLSPFYAKKFQIPYRVPMIWLDVFQVFFVFLVISQHSLHS</sequence>
<organism>
    <name type="scientific">Saccharomyces cerevisiae (strain ATCC 204508 / S288c)</name>
    <name type="common">Baker's yeast</name>
    <dbReference type="NCBI Taxonomy" id="559292"/>
    <lineage>
        <taxon>Eukaryota</taxon>
        <taxon>Fungi</taxon>
        <taxon>Dikarya</taxon>
        <taxon>Ascomycota</taxon>
        <taxon>Saccharomycotina</taxon>
        <taxon>Saccharomycetes</taxon>
        <taxon>Saccharomycetales</taxon>
        <taxon>Saccharomycetaceae</taxon>
        <taxon>Saccharomyces</taxon>
    </lineage>
</organism>
<accession>P0CX99</accession>
<accession>D6VTG3</accession>
<accession>P43536</accession>
<accession>Q547K4</accession>
<accession>Q8TGK2</accession>
<reference key="1">
    <citation type="journal article" date="1995" name="Nat. Genet.">
        <title>Analysis of the nucleotide sequence of chromosome VI from Saccharomyces cerevisiae.</title>
        <authorList>
            <person name="Murakami Y."/>
            <person name="Naitou M."/>
            <person name="Hagiwara H."/>
            <person name="Shibata T."/>
            <person name="Ozawa M."/>
            <person name="Sasanuma S."/>
            <person name="Sasanuma M."/>
            <person name="Tsuchiya Y."/>
            <person name="Soeda E."/>
            <person name="Yokoyama K."/>
            <person name="Yamazaki M."/>
            <person name="Tashiro H."/>
            <person name="Eki T."/>
        </authorList>
    </citation>
    <scope>NUCLEOTIDE SEQUENCE [LARGE SCALE GENOMIC DNA]</scope>
    <source>
        <strain>ATCC 204508 / S288c</strain>
    </source>
</reference>
<reference key="2">
    <citation type="journal article" date="2014" name="G3 (Bethesda)">
        <title>The reference genome sequence of Saccharomyces cerevisiae: Then and now.</title>
        <authorList>
            <person name="Engel S.R."/>
            <person name="Dietrich F.S."/>
            <person name="Fisk D.G."/>
            <person name="Binkley G."/>
            <person name="Balakrishnan R."/>
            <person name="Costanzo M.C."/>
            <person name="Dwight S.S."/>
            <person name="Hitz B.C."/>
            <person name="Karra K."/>
            <person name="Nash R.S."/>
            <person name="Weng S."/>
            <person name="Wong E.D."/>
            <person name="Lloyd P."/>
            <person name="Skrzypek M.S."/>
            <person name="Miyasato S.R."/>
            <person name="Simison M."/>
            <person name="Cherry J.M."/>
        </authorList>
    </citation>
    <scope>GENOME REANNOTATION</scope>
    <source>
        <strain>ATCC 204508 / S288c</strain>
    </source>
</reference>
<reference key="3">
    <citation type="journal article" date="2007" name="Genome Res.">
        <title>Approaching a complete repository of sequence-verified protein-encoding clones for Saccharomyces cerevisiae.</title>
        <authorList>
            <person name="Hu Y."/>
            <person name="Rolfs A."/>
            <person name="Bhullar B."/>
            <person name="Murthy T.V.S."/>
            <person name="Zhu C."/>
            <person name="Berger M.F."/>
            <person name="Camargo A.A."/>
            <person name="Kelley F."/>
            <person name="McCarron S."/>
            <person name="Jepson D."/>
            <person name="Richardson A."/>
            <person name="Raphael J."/>
            <person name="Moreira D."/>
            <person name="Taycher E."/>
            <person name="Zuo D."/>
            <person name="Mohr S."/>
            <person name="Kane M.F."/>
            <person name="Williamson J."/>
            <person name="Simpson A.J.G."/>
            <person name="Bulyk M.L."/>
            <person name="Harlow E."/>
            <person name="Marsischky G."/>
            <person name="Kolodner R.D."/>
            <person name="LaBaer J."/>
        </authorList>
    </citation>
    <scope>NUCLEOTIDE SEQUENCE [GENOMIC DNA]</scope>
    <source>
        <strain>ATCC 204508 / S288c</strain>
    </source>
</reference>